<protein>
    <recommendedName>
        <fullName evidence="1">dCTP deaminase</fullName>
        <ecNumber evidence="1">3.5.4.13</ecNumber>
    </recommendedName>
    <alternativeName>
        <fullName evidence="1">Deoxycytidine triphosphate deaminase</fullName>
    </alternativeName>
</protein>
<accession>A5UB16</accession>
<name>DCD_HAEIE</name>
<organism>
    <name type="scientific">Haemophilus influenzae (strain PittEE)</name>
    <dbReference type="NCBI Taxonomy" id="374930"/>
    <lineage>
        <taxon>Bacteria</taxon>
        <taxon>Pseudomonadati</taxon>
        <taxon>Pseudomonadota</taxon>
        <taxon>Gammaproteobacteria</taxon>
        <taxon>Pasteurellales</taxon>
        <taxon>Pasteurellaceae</taxon>
        <taxon>Haemophilus</taxon>
    </lineage>
</organism>
<proteinExistence type="inferred from homology"/>
<feature type="chain" id="PRO_1000009733" description="dCTP deaminase">
    <location>
        <begin position="1"/>
        <end position="195"/>
    </location>
</feature>
<feature type="region of interest" description="Disordered" evidence="2">
    <location>
        <begin position="169"/>
        <end position="195"/>
    </location>
</feature>
<feature type="compositionally biased region" description="Basic and acidic residues" evidence="2">
    <location>
        <begin position="169"/>
        <end position="179"/>
    </location>
</feature>
<feature type="active site" description="Proton donor/acceptor" evidence="1">
    <location>
        <position position="138"/>
    </location>
</feature>
<feature type="binding site" evidence="1">
    <location>
        <begin position="110"/>
        <end position="115"/>
    </location>
    <ligand>
        <name>dCTP</name>
        <dbReference type="ChEBI" id="CHEBI:61481"/>
    </ligand>
</feature>
<feature type="binding site" evidence="1">
    <location>
        <position position="128"/>
    </location>
    <ligand>
        <name>dCTP</name>
        <dbReference type="ChEBI" id="CHEBI:61481"/>
    </ligand>
</feature>
<feature type="binding site" evidence="1">
    <location>
        <begin position="136"/>
        <end position="138"/>
    </location>
    <ligand>
        <name>dCTP</name>
        <dbReference type="ChEBI" id="CHEBI:61481"/>
    </ligand>
</feature>
<feature type="binding site" evidence="1">
    <location>
        <position position="171"/>
    </location>
    <ligand>
        <name>dCTP</name>
        <dbReference type="ChEBI" id="CHEBI:61481"/>
    </ligand>
</feature>
<feature type="binding site" evidence="1">
    <location>
        <position position="178"/>
    </location>
    <ligand>
        <name>dCTP</name>
        <dbReference type="ChEBI" id="CHEBI:61481"/>
    </ligand>
</feature>
<feature type="binding site" evidence="1">
    <location>
        <position position="182"/>
    </location>
    <ligand>
        <name>dCTP</name>
        <dbReference type="ChEBI" id="CHEBI:61481"/>
    </ligand>
</feature>
<sequence length="195" mass="21578">MRLCDTDIERYLDDGIISLTPRPNNDKINGATIDVRLGNSFRVFREHSAPFIDLSGPKEEVSAQLESVMSDEILIPEGEAFFLHPGTLALATTLESVKLPANIIGWLDGRSSLARLGLMVHVTAHRIDPGWEGKIVLEFYNSGKLPLALRPNMVIGALSFEVLSGEAKRPYSSRKDAKYKNQQSAVASRIDEDKE</sequence>
<gene>
    <name evidence="1" type="primary">dcd</name>
    <name type="ordered locus">CGSHiEE_02630</name>
</gene>
<reference key="1">
    <citation type="journal article" date="2007" name="Genome Biol.">
        <title>Characterization and modeling of the Haemophilus influenzae core and supragenomes based on the complete genomic sequences of Rd and 12 clinical nontypeable strains.</title>
        <authorList>
            <person name="Hogg J.S."/>
            <person name="Hu F.Z."/>
            <person name="Janto B."/>
            <person name="Boissy R."/>
            <person name="Hayes J."/>
            <person name="Keefe R."/>
            <person name="Post J.C."/>
            <person name="Ehrlich G.D."/>
        </authorList>
    </citation>
    <scope>NUCLEOTIDE SEQUENCE [LARGE SCALE GENOMIC DNA]</scope>
    <source>
        <strain>PittEE</strain>
    </source>
</reference>
<dbReference type="EC" id="3.5.4.13" evidence="1"/>
<dbReference type="EMBL" id="CP000671">
    <property type="protein sequence ID" value="ABQ97967.1"/>
    <property type="molecule type" value="Genomic_DNA"/>
</dbReference>
<dbReference type="SMR" id="A5UB16"/>
<dbReference type="KEGG" id="hip:CGSHiEE_02630"/>
<dbReference type="HOGENOM" id="CLU_087476_2_0_6"/>
<dbReference type="UniPathway" id="UPA00610">
    <property type="reaction ID" value="UER00665"/>
</dbReference>
<dbReference type="GO" id="GO:0008829">
    <property type="term" value="F:dCTP deaminase activity"/>
    <property type="evidence" value="ECO:0007669"/>
    <property type="project" value="UniProtKB-UniRule"/>
</dbReference>
<dbReference type="GO" id="GO:0000166">
    <property type="term" value="F:nucleotide binding"/>
    <property type="evidence" value="ECO:0007669"/>
    <property type="project" value="UniProtKB-KW"/>
</dbReference>
<dbReference type="GO" id="GO:0006226">
    <property type="term" value="P:dUMP biosynthetic process"/>
    <property type="evidence" value="ECO:0007669"/>
    <property type="project" value="UniProtKB-UniPathway"/>
</dbReference>
<dbReference type="GO" id="GO:0006229">
    <property type="term" value="P:dUTP biosynthetic process"/>
    <property type="evidence" value="ECO:0007669"/>
    <property type="project" value="UniProtKB-UniRule"/>
</dbReference>
<dbReference type="GO" id="GO:0015949">
    <property type="term" value="P:nucleobase-containing small molecule interconversion"/>
    <property type="evidence" value="ECO:0007669"/>
    <property type="project" value="TreeGrafter"/>
</dbReference>
<dbReference type="CDD" id="cd07557">
    <property type="entry name" value="trimeric_dUTPase"/>
    <property type="match status" value="1"/>
</dbReference>
<dbReference type="FunFam" id="2.70.40.10:FF:000003">
    <property type="entry name" value="dCTP deaminase"/>
    <property type="match status" value="1"/>
</dbReference>
<dbReference type="Gene3D" id="2.70.40.10">
    <property type="match status" value="1"/>
</dbReference>
<dbReference type="HAMAP" id="MF_00146">
    <property type="entry name" value="dCTP_deaminase"/>
    <property type="match status" value="1"/>
</dbReference>
<dbReference type="InterPro" id="IPR011962">
    <property type="entry name" value="dCTP_deaminase"/>
</dbReference>
<dbReference type="InterPro" id="IPR036157">
    <property type="entry name" value="dUTPase-like_sf"/>
</dbReference>
<dbReference type="InterPro" id="IPR033704">
    <property type="entry name" value="dUTPase_trimeric"/>
</dbReference>
<dbReference type="NCBIfam" id="TIGR02274">
    <property type="entry name" value="dCTP_deam"/>
    <property type="match status" value="1"/>
</dbReference>
<dbReference type="PANTHER" id="PTHR42680">
    <property type="entry name" value="DCTP DEAMINASE"/>
    <property type="match status" value="1"/>
</dbReference>
<dbReference type="PANTHER" id="PTHR42680:SF3">
    <property type="entry name" value="DCTP DEAMINASE"/>
    <property type="match status" value="1"/>
</dbReference>
<dbReference type="Pfam" id="PF22769">
    <property type="entry name" value="DCD"/>
    <property type="match status" value="1"/>
</dbReference>
<dbReference type="SUPFAM" id="SSF51283">
    <property type="entry name" value="dUTPase-like"/>
    <property type="match status" value="1"/>
</dbReference>
<comment type="function">
    <text evidence="1">Catalyzes the deamination of dCTP to dUTP.</text>
</comment>
<comment type="catalytic activity">
    <reaction evidence="1">
        <text>dCTP + H2O + H(+) = dUTP + NH4(+)</text>
        <dbReference type="Rhea" id="RHEA:22680"/>
        <dbReference type="ChEBI" id="CHEBI:15377"/>
        <dbReference type="ChEBI" id="CHEBI:15378"/>
        <dbReference type="ChEBI" id="CHEBI:28938"/>
        <dbReference type="ChEBI" id="CHEBI:61481"/>
        <dbReference type="ChEBI" id="CHEBI:61555"/>
        <dbReference type="EC" id="3.5.4.13"/>
    </reaction>
</comment>
<comment type="pathway">
    <text evidence="1">Pyrimidine metabolism; dUMP biosynthesis; dUMP from dCTP (dUTP route): step 1/2.</text>
</comment>
<comment type="subunit">
    <text evidence="1">Homotrimer.</text>
</comment>
<comment type="similarity">
    <text evidence="1">Belongs to the dCTP deaminase family.</text>
</comment>
<evidence type="ECO:0000255" key="1">
    <source>
        <dbReference type="HAMAP-Rule" id="MF_00146"/>
    </source>
</evidence>
<evidence type="ECO:0000256" key="2">
    <source>
        <dbReference type="SAM" id="MobiDB-lite"/>
    </source>
</evidence>
<keyword id="KW-0378">Hydrolase</keyword>
<keyword id="KW-0546">Nucleotide metabolism</keyword>
<keyword id="KW-0547">Nucleotide-binding</keyword>